<keyword id="KW-0030">Aminoacyl-tRNA synthetase</keyword>
<keyword id="KW-0067">ATP-binding</keyword>
<keyword id="KW-0963">Cytoplasm</keyword>
<keyword id="KW-0436">Ligase</keyword>
<keyword id="KW-0460">Magnesium</keyword>
<keyword id="KW-0479">Metal-binding</keyword>
<keyword id="KW-0547">Nucleotide-binding</keyword>
<keyword id="KW-0648">Protein biosynthesis</keyword>
<keyword id="KW-1185">Reference proteome</keyword>
<accession>Q3IT59</accession>
<organism>
    <name type="scientific">Natronomonas pharaonis (strain ATCC 35678 / DSM 2160 / CIP 103997 / JCM 8858 / NBRC 14720 / NCIMB 2260 / Gabara)</name>
    <name type="common">Halobacterium pharaonis</name>
    <dbReference type="NCBI Taxonomy" id="348780"/>
    <lineage>
        <taxon>Archaea</taxon>
        <taxon>Methanobacteriati</taxon>
        <taxon>Methanobacteriota</taxon>
        <taxon>Stenosarchaea group</taxon>
        <taxon>Halobacteria</taxon>
        <taxon>Halobacteriales</taxon>
        <taxon>Haloarculaceae</taxon>
        <taxon>Natronomonas</taxon>
    </lineage>
</organism>
<reference key="1">
    <citation type="journal article" date="2005" name="Genome Res.">
        <title>Living with two extremes: conclusions from the genome sequence of Natronomonas pharaonis.</title>
        <authorList>
            <person name="Falb M."/>
            <person name="Pfeiffer F."/>
            <person name="Palm P."/>
            <person name="Rodewald K."/>
            <person name="Hickmann V."/>
            <person name="Tittor J."/>
            <person name="Oesterhelt D."/>
        </authorList>
    </citation>
    <scope>NUCLEOTIDE SEQUENCE [LARGE SCALE GENOMIC DNA]</scope>
    <source>
        <strain>ATCC 35678 / DSM 2160 / CIP 103997 / JCM 8858 / NBRC 14720 / NCIMB 2260 / Gabara</strain>
    </source>
</reference>
<proteinExistence type="inferred from homology"/>
<gene>
    <name evidence="1" type="primary">aspS</name>
    <name type="ordered locus">NP_1168A</name>
</gene>
<name>SYDND_NATPD</name>
<dbReference type="EC" id="6.1.1.23" evidence="1"/>
<dbReference type="EMBL" id="CR936257">
    <property type="protein sequence ID" value="CAI48675.1"/>
    <property type="molecule type" value="Genomic_DNA"/>
</dbReference>
<dbReference type="RefSeq" id="WP_011322311.1">
    <property type="nucleotide sequence ID" value="NC_007426.1"/>
</dbReference>
<dbReference type="SMR" id="Q3IT59"/>
<dbReference type="STRING" id="348780.NP_1168A"/>
<dbReference type="EnsemblBacteria" id="CAI48675">
    <property type="protein sequence ID" value="CAI48675"/>
    <property type="gene ID" value="NP_1168A"/>
</dbReference>
<dbReference type="GeneID" id="3702537"/>
<dbReference type="KEGG" id="nph:NP_1168A"/>
<dbReference type="eggNOG" id="arCOG00406">
    <property type="taxonomic scope" value="Archaea"/>
</dbReference>
<dbReference type="HOGENOM" id="CLU_004553_2_1_2"/>
<dbReference type="OrthoDB" id="5908at2157"/>
<dbReference type="Proteomes" id="UP000002698">
    <property type="component" value="Chromosome"/>
</dbReference>
<dbReference type="GO" id="GO:0017101">
    <property type="term" value="C:aminoacyl-tRNA synthetase multienzyme complex"/>
    <property type="evidence" value="ECO:0007669"/>
    <property type="project" value="TreeGrafter"/>
</dbReference>
<dbReference type="GO" id="GO:0005829">
    <property type="term" value="C:cytosol"/>
    <property type="evidence" value="ECO:0007669"/>
    <property type="project" value="TreeGrafter"/>
</dbReference>
<dbReference type="GO" id="GO:0004815">
    <property type="term" value="F:aspartate-tRNA ligase activity"/>
    <property type="evidence" value="ECO:0007669"/>
    <property type="project" value="UniProtKB-UniRule"/>
</dbReference>
<dbReference type="GO" id="GO:0050560">
    <property type="term" value="F:aspartate-tRNA(Asn) ligase activity"/>
    <property type="evidence" value="ECO:0007669"/>
    <property type="project" value="UniProtKB-EC"/>
</dbReference>
<dbReference type="GO" id="GO:0005524">
    <property type="term" value="F:ATP binding"/>
    <property type="evidence" value="ECO:0007669"/>
    <property type="project" value="UniProtKB-UniRule"/>
</dbReference>
<dbReference type="GO" id="GO:0000287">
    <property type="term" value="F:magnesium ion binding"/>
    <property type="evidence" value="ECO:0007669"/>
    <property type="project" value="UniProtKB-UniRule"/>
</dbReference>
<dbReference type="GO" id="GO:0003723">
    <property type="term" value="F:RNA binding"/>
    <property type="evidence" value="ECO:0007669"/>
    <property type="project" value="TreeGrafter"/>
</dbReference>
<dbReference type="GO" id="GO:0006422">
    <property type="term" value="P:aspartyl-tRNA aminoacylation"/>
    <property type="evidence" value="ECO:0007669"/>
    <property type="project" value="UniProtKB-UniRule"/>
</dbReference>
<dbReference type="CDD" id="cd00776">
    <property type="entry name" value="AsxRS_core"/>
    <property type="match status" value="1"/>
</dbReference>
<dbReference type="CDD" id="cd04316">
    <property type="entry name" value="ND_PkAspRS_like_N"/>
    <property type="match status" value="1"/>
</dbReference>
<dbReference type="FunFam" id="3.30.930.10:FF:000038">
    <property type="entry name" value="Aspartate--tRNA ligase"/>
    <property type="match status" value="1"/>
</dbReference>
<dbReference type="Gene3D" id="3.30.930.10">
    <property type="entry name" value="Bira Bifunctional Protein, Domain 2"/>
    <property type="match status" value="1"/>
</dbReference>
<dbReference type="Gene3D" id="2.40.50.140">
    <property type="entry name" value="Nucleic acid-binding proteins"/>
    <property type="match status" value="1"/>
</dbReference>
<dbReference type="HAMAP" id="MF_02075">
    <property type="entry name" value="Asp_tRNA_synth_type2"/>
    <property type="match status" value="1"/>
</dbReference>
<dbReference type="InterPro" id="IPR004364">
    <property type="entry name" value="Aa-tRNA-synt_II"/>
</dbReference>
<dbReference type="InterPro" id="IPR006195">
    <property type="entry name" value="aa-tRNA-synth_II"/>
</dbReference>
<dbReference type="InterPro" id="IPR045864">
    <property type="entry name" value="aa-tRNA-synth_II/BPL/LPL"/>
</dbReference>
<dbReference type="InterPro" id="IPR004523">
    <property type="entry name" value="Asp-tRNA_synthase_2"/>
</dbReference>
<dbReference type="InterPro" id="IPR002312">
    <property type="entry name" value="Asp/Asn-tRNA-synth_IIb"/>
</dbReference>
<dbReference type="InterPro" id="IPR012340">
    <property type="entry name" value="NA-bd_OB-fold"/>
</dbReference>
<dbReference type="InterPro" id="IPR004365">
    <property type="entry name" value="NA-bd_OB_tRNA"/>
</dbReference>
<dbReference type="NCBIfam" id="TIGR00458">
    <property type="entry name" value="aspS_nondisc"/>
    <property type="match status" value="1"/>
</dbReference>
<dbReference type="NCBIfam" id="NF003483">
    <property type="entry name" value="PRK05159.1"/>
    <property type="match status" value="1"/>
</dbReference>
<dbReference type="PANTHER" id="PTHR43450:SF1">
    <property type="entry name" value="ASPARTATE--TRNA LIGASE, CYTOPLASMIC"/>
    <property type="match status" value="1"/>
</dbReference>
<dbReference type="PANTHER" id="PTHR43450">
    <property type="entry name" value="ASPARTYL-TRNA SYNTHETASE"/>
    <property type="match status" value="1"/>
</dbReference>
<dbReference type="Pfam" id="PF00152">
    <property type="entry name" value="tRNA-synt_2"/>
    <property type="match status" value="1"/>
</dbReference>
<dbReference type="Pfam" id="PF01336">
    <property type="entry name" value="tRNA_anti-codon"/>
    <property type="match status" value="1"/>
</dbReference>
<dbReference type="PRINTS" id="PR01042">
    <property type="entry name" value="TRNASYNTHASP"/>
</dbReference>
<dbReference type="SUPFAM" id="SSF55681">
    <property type="entry name" value="Class II aaRS and biotin synthetases"/>
    <property type="match status" value="1"/>
</dbReference>
<dbReference type="SUPFAM" id="SSF50249">
    <property type="entry name" value="Nucleic acid-binding proteins"/>
    <property type="match status" value="1"/>
</dbReference>
<dbReference type="PROSITE" id="PS50862">
    <property type="entry name" value="AA_TRNA_LIGASE_II"/>
    <property type="match status" value="1"/>
</dbReference>
<protein>
    <recommendedName>
        <fullName evidence="1">Aspartate--tRNA(Asp/Asn) ligase</fullName>
        <ecNumber evidence="1">6.1.1.23</ecNumber>
    </recommendedName>
    <alternativeName>
        <fullName evidence="1">Aspartyl-tRNA synthetase</fullName>
        <shortName evidence="1">AspRS</shortName>
    </alternativeName>
    <alternativeName>
        <fullName evidence="1">Non-discriminating aspartyl-tRNA synthetase</fullName>
        <shortName evidence="1">ND-AspRS</shortName>
    </alternativeName>
</protein>
<feature type="chain" id="PRO_0000235586" description="Aspartate--tRNA(Asp/Asn) ligase">
    <location>
        <begin position="1"/>
        <end position="433"/>
    </location>
</feature>
<feature type="region of interest" description="Aspartate" evidence="1">
    <location>
        <begin position="189"/>
        <end position="192"/>
    </location>
</feature>
<feature type="binding site" evidence="1">
    <location>
        <position position="167"/>
    </location>
    <ligand>
        <name>L-aspartate</name>
        <dbReference type="ChEBI" id="CHEBI:29991"/>
    </ligand>
</feature>
<feature type="binding site" evidence="1">
    <location>
        <begin position="211"/>
        <end position="213"/>
    </location>
    <ligand>
        <name>ATP</name>
        <dbReference type="ChEBI" id="CHEBI:30616"/>
    </ligand>
</feature>
<feature type="binding site" evidence="1">
    <location>
        <position position="211"/>
    </location>
    <ligand>
        <name>L-aspartate</name>
        <dbReference type="ChEBI" id="CHEBI:29991"/>
    </ligand>
</feature>
<feature type="binding site" evidence="1">
    <location>
        <begin position="219"/>
        <end position="221"/>
    </location>
    <ligand>
        <name>ATP</name>
        <dbReference type="ChEBI" id="CHEBI:30616"/>
    </ligand>
</feature>
<feature type="binding site" evidence="1">
    <location>
        <position position="356"/>
    </location>
    <ligand>
        <name>ATP</name>
        <dbReference type="ChEBI" id="CHEBI:30616"/>
    </ligand>
</feature>
<feature type="binding site" evidence="1">
    <location>
        <position position="356"/>
    </location>
    <ligand>
        <name>Mg(2+)</name>
        <dbReference type="ChEBI" id="CHEBI:18420"/>
        <label>2</label>
    </ligand>
</feature>
<feature type="binding site" evidence="1">
    <location>
        <position position="356"/>
    </location>
    <ligand>
        <name>Mg(2+)</name>
        <dbReference type="ChEBI" id="CHEBI:18420"/>
        <label>3</label>
    </ligand>
</feature>
<feature type="binding site" evidence="1">
    <location>
        <position position="359"/>
    </location>
    <ligand>
        <name>L-aspartate</name>
        <dbReference type="ChEBI" id="CHEBI:29991"/>
    </ligand>
</feature>
<feature type="binding site" evidence="1">
    <location>
        <position position="359"/>
    </location>
    <ligand>
        <name>Mg(2+)</name>
        <dbReference type="ChEBI" id="CHEBI:18420"/>
        <label>2</label>
    </ligand>
</feature>
<feature type="binding site" evidence="1">
    <location>
        <position position="363"/>
    </location>
    <ligand>
        <name>L-aspartate</name>
        <dbReference type="ChEBI" id="CHEBI:29991"/>
    </ligand>
</feature>
<feature type="binding site" evidence="1">
    <location>
        <begin position="404"/>
        <end position="407"/>
    </location>
    <ligand>
        <name>ATP</name>
        <dbReference type="ChEBI" id="CHEBI:30616"/>
    </ligand>
</feature>
<feature type="site" description="Important for tRNA non-discrimination" evidence="1">
    <location>
        <position position="82"/>
    </location>
</feature>
<sequence>MENRTYTADAEPGETVTVAGWVHEVRDLGGIAFLILRDTTGQIQVKFEKDEMDDELVETGLNVARESVITVSGDVEEEPRAPTGVEVTPETVEVLSEADTELPLDPTGKVDAELSTRLDNRTLDLRSEEGQAIFEIRAEVLRAVREAFRDANATEINTSKIVATGTEGGTELFPITYFGEEAFMNQSPQLFKQLVAGSNIERVFEIGPIFRAEEHNTPRHLNEATSIDFEGAFCDHTDAMDVCEQVVTAAYEAVAENCTDQLEALGITEEFEVPETPFPRLSYEEAIERINATGELDEQLVWGDDLPTEGEKALGDDVGGHYFITDWPAEIKPFYIMDHEDGELSTGFDMMHPRMELVSGGQREHRREELIAGFEQQGLEPEAFEYYTKMFKYGMPPHAGWGLGGERLLMTMLDLDNIREAVLFPRDRQRLSP</sequence>
<comment type="function">
    <text evidence="1">Aspartyl-tRNA synthetase with relaxed tRNA specificity since it is able to aspartylate not only its cognate tRNA(Asp) but also tRNA(Asn). Reaction proceeds in two steps: L-aspartate is first activated by ATP to form Asp-AMP and then transferred to the acceptor end of tRNA(Asp/Asn).</text>
</comment>
<comment type="catalytic activity">
    <reaction evidence="1">
        <text>tRNA(Asx) + L-aspartate + ATP = L-aspartyl-tRNA(Asx) + AMP + diphosphate</text>
        <dbReference type="Rhea" id="RHEA:18349"/>
        <dbReference type="Rhea" id="RHEA-COMP:9710"/>
        <dbReference type="Rhea" id="RHEA-COMP:9711"/>
        <dbReference type="ChEBI" id="CHEBI:29991"/>
        <dbReference type="ChEBI" id="CHEBI:30616"/>
        <dbReference type="ChEBI" id="CHEBI:33019"/>
        <dbReference type="ChEBI" id="CHEBI:78442"/>
        <dbReference type="ChEBI" id="CHEBI:78516"/>
        <dbReference type="ChEBI" id="CHEBI:456215"/>
        <dbReference type="EC" id="6.1.1.23"/>
    </reaction>
</comment>
<comment type="cofactor">
    <cofactor evidence="1">
        <name>Mg(2+)</name>
        <dbReference type="ChEBI" id="CHEBI:18420"/>
    </cofactor>
    <text evidence="1">Binds 3 Mg(2+) cations per subunit. The strongest magnesium site (Mg1) is bound to the beta- and gamma-phosphates of ATP and four water molecules complete its coordination sphere.</text>
</comment>
<comment type="subunit">
    <text evidence="1">Homodimer.</text>
</comment>
<comment type="subcellular location">
    <subcellularLocation>
        <location evidence="1">Cytoplasm</location>
    </subcellularLocation>
</comment>
<comment type="similarity">
    <text evidence="1">Belongs to the class-II aminoacyl-tRNA synthetase family. Type 2 subfamily.</text>
</comment>
<evidence type="ECO:0000255" key="1">
    <source>
        <dbReference type="HAMAP-Rule" id="MF_02075"/>
    </source>
</evidence>